<organism>
    <name type="scientific">Pongo abelii</name>
    <name type="common">Sumatran orangutan</name>
    <name type="synonym">Pongo pygmaeus abelii</name>
    <dbReference type="NCBI Taxonomy" id="9601"/>
    <lineage>
        <taxon>Eukaryota</taxon>
        <taxon>Metazoa</taxon>
        <taxon>Chordata</taxon>
        <taxon>Craniata</taxon>
        <taxon>Vertebrata</taxon>
        <taxon>Euteleostomi</taxon>
        <taxon>Mammalia</taxon>
        <taxon>Eutheria</taxon>
        <taxon>Euarchontoglires</taxon>
        <taxon>Primates</taxon>
        <taxon>Haplorrhini</taxon>
        <taxon>Catarrhini</taxon>
        <taxon>Hominidae</taxon>
        <taxon>Pongo</taxon>
    </lineage>
</organism>
<evidence type="ECO:0000250" key="1"/>
<evidence type="ECO:0000250" key="2">
    <source>
        <dbReference type="UniProtKB" id="Q8JZM0"/>
    </source>
</evidence>
<evidence type="ECO:0000250" key="3">
    <source>
        <dbReference type="UniProtKB" id="Q8WVM0"/>
    </source>
</evidence>
<evidence type="ECO:0000255" key="4"/>
<evidence type="ECO:0000255" key="5">
    <source>
        <dbReference type="PROSITE-ProRule" id="PRU01026"/>
    </source>
</evidence>
<gene>
    <name type="primary">TFB1M</name>
</gene>
<sequence length="343" mass="39083">MAASGKLSTWRLPPLPTIREIIKLLRVQAAKQLSQNFLLDLRLTDKIVRKAGNLTNAYVYEVGPGPGGITRSILNADVAELLVVEKDTRFVPGLQMLSDAAPGKLRIVHGDVLTFKVEKAFSESLKRPWEDDPPDVHIIGNLPFSVSTPLIIKWLENISCRDGPFVYGRTQMTLTFQKEVAERLAANTGSKQRSRLSVMAQYLCNVRHIFTIPGRAFVPKPEVDVGVVHFTPLIQPKIEQPFKLVEKVVQNVFQFRRKYCHRGLRMLFPEAQRLESTGRLLELADVDPTLRPCQPSISHFKSLCDVYRKMCDEDPQLFAYNFREELKQRKSKNEEKEEDDAEN</sequence>
<protein>
    <recommendedName>
        <fullName>Dimethyladenosine transferase 1, mitochondrial</fullName>
        <ecNumber evidence="3">2.1.1.-</ecNumber>
    </recommendedName>
    <alternativeName>
        <fullName>Mitochondrial 12S rRNA dimethylase 1</fullName>
    </alternativeName>
    <alternativeName>
        <fullName>Mitochondrial transcription factor B1</fullName>
        <shortName>mtTFB1</shortName>
    </alternativeName>
    <alternativeName>
        <fullName>S-adenosylmethionine-6-N', N'-adenosyl(rRNA) dimethyltransferase 1</fullName>
    </alternativeName>
</protein>
<proteinExistence type="evidence at transcript level"/>
<accession>Q5R4V9</accession>
<reference key="1">
    <citation type="submission" date="2004-11" db="EMBL/GenBank/DDBJ databases">
        <authorList>
            <consortium name="The German cDNA consortium"/>
        </authorList>
    </citation>
    <scope>NUCLEOTIDE SEQUENCE [LARGE SCALE MRNA]</scope>
    <source>
        <tissue>Brain cortex</tissue>
    </source>
</reference>
<dbReference type="EC" id="2.1.1.-" evidence="3"/>
<dbReference type="EMBL" id="CR861132">
    <property type="protein sequence ID" value="CAH93207.1"/>
    <property type="molecule type" value="mRNA"/>
</dbReference>
<dbReference type="RefSeq" id="NP_001126887.1">
    <property type="nucleotide sequence ID" value="NM_001133415.2"/>
</dbReference>
<dbReference type="SMR" id="Q5R4V9"/>
<dbReference type="FunCoup" id="Q5R4V9">
    <property type="interactions" value="295"/>
</dbReference>
<dbReference type="STRING" id="9601.ENSPPYP00000019173"/>
<dbReference type="GeneID" id="100173901"/>
<dbReference type="KEGG" id="pon:100173901"/>
<dbReference type="CTD" id="51106"/>
<dbReference type="eggNOG" id="KOG0821">
    <property type="taxonomic scope" value="Eukaryota"/>
</dbReference>
<dbReference type="InParanoid" id="Q5R4V9"/>
<dbReference type="OrthoDB" id="16079at2759"/>
<dbReference type="Proteomes" id="UP000001595">
    <property type="component" value="Unplaced"/>
</dbReference>
<dbReference type="GO" id="GO:0005759">
    <property type="term" value="C:mitochondrial matrix"/>
    <property type="evidence" value="ECO:0007669"/>
    <property type="project" value="TreeGrafter"/>
</dbReference>
<dbReference type="GO" id="GO:0003677">
    <property type="term" value="F:DNA binding"/>
    <property type="evidence" value="ECO:0007669"/>
    <property type="project" value="UniProtKB-KW"/>
</dbReference>
<dbReference type="GO" id="GO:0034246">
    <property type="term" value="F:mitochondrial transcription factor activity"/>
    <property type="evidence" value="ECO:0007669"/>
    <property type="project" value="TreeGrafter"/>
</dbReference>
<dbReference type="GO" id="GO:0003723">
    <property type="term" value="F:RNA binding"/>
    <property type="evidence" value="ECO:0007669"/>
    <property type="project" value="UniProtKB-KW"/>
</dbReference>
<dbReference type="GO" id="GO:0000179">
    <property type="term" value="F:rRNA (adenine-N6,N6-)-dimethyltransferase activity"/>
    <property type="evidence" value="ECO:0000250"/>
    <property type="project" value="UniProtKB"/>
</dbReference>
<dbReference type="GO" id="GO:1904047">
    <property type="term" value="F:S-adenosyl-L-methionine binding"/>
    <property type="evidence" value="ECO:0000250"/>
    <property type="project" value="UniProtKB"/>
</dbReference>
<dbReference type="GO" id="GO:0031167">
    <property type="term" value="P:rRNA methylation"/>
    <property type="evidence" value="ECO:0000250"/>
    <property type="project" value="UniProtKB"/>
</dbReference>
<dbReference type="GO" id="GO:0006391">
    <property type="term" value="P:transcription initiation at mitochondrial promoter"/>
    <property type="evidence" value="ECO:0007669"/>
    <property type="project" value="TreeGrafter"/>
</dbReference>
<dbReference type="CDD" id="cd02440">
    <property type="entry name" value="AdoMet_MTases"/>
    <property type="match status" value="1"/>
</dbReference>
<dbReference type="FunFam" id="1.10.8.100:FF:000004">
    <property type="entry name" value="rRNA adenine N(6)-methyltransferase"/>
    <property type="match status" value="1"/>
</dbReference>
<dbReference type="FunFam" id="3.40.50.150:FF:000109">
    <property type="entry name" value="rRNA adenine N(6)-methyltransferase"/>
    <property type="match status" value="1"/>
</dbReference>
<dbReference type="Gene3D" id="1.10.8.100">
    <property type="entry name" value="Ribosomal RNA adenine dimethylase-like, domain 2"/>
    <property type="match status" value="1"/>
</dbReference>
<dbReference type="Gene3D" id="3.40.50.150">
    <property type="entry name" value="Vaccinia Virus protein VP39"/>
    <property type="match status" value="1"/>
</dbReference>
<dbReference type="InterPro" id="IPR001737">
    <property type="entry name" value="KsgA/Erm"/>
</dbReference>
<dbReference type="InterPro" id="IPR023165">
    <property type="entry name" value="rRNA_Ade_diMease-like_C"/>
</dbReference>
<dbReference type="InterPro" id="IPR020596">
    <property type="entry name" value="rRNA_Ade_Mease_Trfase_CS"/>
</dbReference>
<dbReference type="InterPro" id="IPR020598">
    <property type="entry name" value="rRNA_Ade_methylase_Trfase_N"/>
</dbReference>
<dbReference type="InterPro" id="IPR011530">
    <property type="entry name" value="rRNA_adenine_dimethylase"/>
</dbReference>
<dbReference type="InterPro" id="IPR029063">
    <property type="entry name" value="SAM-dependent_MTases_sf"/>
</dbReference>
<dbReference type="NCBIfam" id="TIGR00755">
    <property type="entry name" value="ksgA"/>
    <property type="match status" value="1"/>
</dbReference>
<dbReference type="PANTHER" id="PTHR11727">
    <property type="entry name" value="DIMETHYLADENOSINE TRANSFERASE"/>
    <property type="match status" value="1"/>
</dbReference>
<dbReference type="PANTHER" id="PTHR11727:SF17">
    <property type="entry name" value="DIMETHYLADENOSINE TRANSFERASE 1, MITOCHONDRIAL"/>
    <property type="match status" value="1"/>
</dbReference>
<dbReference type="Pfam" id="PF00398">
    <property type="entry name" value="RrnaAD"/>
    <property type="match status" value="1"/>
</dbReference>
<dbReference type="SMART" id="SM00650">
    <property type="entry name" value="rADc"/>
    <property type="match status" value="1"/>
</dbReference>
<dbReference type="SUPFAM" id="SSF53335">
    <property type="entry name" value="S-adenosyl-L-methionine-dependent methyltransferases"/>
    <property type="match status" value="1"/>
</dbReference>
<dbReference type="PROSITE" id="PS01131">
    <property type="entry name" value="RRNA_A_DIMETH"/>
    <property type="match status" value="1"/>
</dbReference>
<dbReference type="PROSITE" id="PS51689">
    <property type="entry name" value="SAM_RNA_A_N6_MT"/>
    <property type="match status" value="1"/>
</dbReference>
<feature type="transit peptide" description="Mitochondrion" evidence="4">
    <location>
        <begin position="1"/>
        <end position="27"/>
    </location>
</feature>
<feature type="chain" id="PRO_0000273174" description="Dimethyladenosine transferase 1, mitochondrial">
    <location>
        <begin position="28"/>
        <end position="343"/>
    </location>
</feature>
<feature type="binding site" evidence="2">
    <location>
        <position position="38"/>
    </location>
    <ligand>
        <name>S-adenosyl-L-methionine</name>
        <dbReference type="ChEBI" id="CHEBI:59789"/>
    </ligand>
</feature>
<feature type="binding site" evidence="5">
    <location>
        <position position="63"/>
    </location>
    <ligand>
        <name>S-adenosyl-L-methionine</name>
        <dbReference type="ChEBI" id="CHEBI:59789"/>
    </ligand>
</feature>
<feature type="binding site" evidence="2">
    <location>
        <position position="85"/>
    </location>
    <ligand>
        <name>S-adenosyl-L-methionine</name>
        <dbReference type="ChEBI" id="CHEBI:59789"/>
    </ligand>
</feature>
<feature type="binding site" evidence="2">
    <location>
        <position position="86"/>
    </location>
    <ligand>
        <name>S-adenosyl-L-methionine</name>
        <dbReference type="ChEBI" id="CHEBI:59789"/>
    </ligand>
</feature>
<feature type="binding site" evidence="2">
    <location>
        <position position="111"/>
    </location>
    <ligand>
        <name>S-adenosyl-L-methionine</name>
        <dbReference type="ChEBI" id="CHEBI:59789"/>
    </ligand>
</feature>
<feature type="binding site" evidence="2">
    <location>
        <position position="112"/>
    </location>
    <ligand>
        <name>S-adenosyl-L-methionine</name>
        <dbReference type="ChEBI" id="CHEBI:59789"/>
    </ligand>
</feature>
<feature type="binding site" evidence="5">
    <location>
        <position position="141"/>
    </location>
    <ligand>
        <name>S-adenosyl-L-methionine</name>
        <dbReference type="ChEBI" id="CHEBI:59789"/>
    </ligand>
</feature>
<name>TFB1M_PONAB</name>
<comment type="function">
    <text evidence="1">S-adenosyl-L-methionine-dependent methyltransferase which specifically dimethylates mitochondrial 12S rRNA at the conserved stem loop. Also required for basal transcription of mitochondrial DNA, probably via its interaction with POLRMT and TFAM. Stimulates transcription independently of the methyltransferase activity (By similarity).</text>
</comment>
<comment type="function">
    <text evidence="3">Mitochondrial methyltransferase which uses S-adenosyl methionine to dimethylate two highly conserved adjacent adenosine residues (A1583 and A1584) within the loop of helix 45 at the 3-prime end of 12S rRNA, thereby regulating the assembly or stability of the small subunit of the mitochondrial ribosome. Also required for basal transcription of mitochondrial DNA, probably via its interaction with POLRMT and TFAM. Stimulates transcription independently of the methyltransferase activity.</text>
</comment>
<comment type="catalytic activity">
    <reaction evidence="3">
        <text>adenosine(N)/adenosine(N+1) in rRNA + 4 S-adenosyl-L-methionine = N(6)-dimethyladenosine(N)/N(6)-dimethyladenosine(N+1) in rRNA + 4 S-adenosyl-L-homocysteine + 4 H(+)</text>
        <dbReference type="Rhea" id="RHEA:78527"/>
        <dbReference type="Rhea" id="RHEA-COMP:19105"/>
        <dbReference type="Rhea" id="RHEA-COMP:19106"/>
        <dbReference type="ChEBI" id="CHEBI:15378"/>
        <dbReference type="ChEBI" id="CHEBI:57856"/>
        <dbReference type="ChEBI" id="CHEBI:59789"/>
        <dbReference type="ChEBI" id="CHEBI:74411"/>
        <dbReference type="ChEBI" id="CHEBI:74493"/>
    </reaction>
</comment>
<comment type="subunit">
    <text evidence="2 3">Interacts with mitochondrial RNA polymerase POLRMT. Interacts with TFAM (By similarity). Bound to the maturing mtSSU until the late stages of assembly (By similarity).</text>
</comment>
<comment type="subcellular location">
    <subcellularLocation>
        <location evidence="3">Mitochondrion</location>
    </subcellularLocation>
</comment>
<comment type="similarity">
    <text evidence="5">Belongs to the class I-like SAM-binding methyltransferase superfamily. rRNA adenine N(6)-methyltransferase family. KsgA subfamily.</text>
</comment>
<keyword id="KW-0238">DNA-binding</keyword>
<keyword id="KW-0489">Methyltransferase</keyword>
<keyword id="KW-0496">Mitochondrion</keyword>
<keyword id="KW-1185">Reference proteome</keyword>
<keyword id="KW-0694">RNA-binding</keyword>
<keyword id="KW-0698">rRNA processing</keyword>
<keyword id="KW-0949">S-adenosyl-L-methionine</keyword>
<keyword id="KW-0804">Transcription</keyword>
<keyword id="KW-0805">Transcription regulation</keyword>
<keyword id="KW-0808">Transferase</keyword>
<keyword id="KW-0809">Transit peptide</keyword>